<reference key="1">
    <citation type="journal article" date="2005" name="Science">
        <title>Life at depth: Photobacterium profundum genome sequence and expression analysis.</title>
        <authorList>
            <person name="Vezzi A."/>
            <person name="Campanaro S."/>
            <person name="D'Angelo M."/>
            <person name="Simonato F."/>
            <person name="Vitulo N."/>
            <person name="Lauro F.M."/>
            <person name="Cestaro A."/>
            <person name="Malacrida G."/>
            <person name="Simionati B."/>
            <person name="Cannata N."/>
            <person name="Romualdi C."/>
            <person name="Bartlett D.H."/>
            <person name="Valle G."/>
        </authorList>
    </citation>
    <scope>NUCLEOTIDE SEQUENCE [LARGE SCALE GENOMIC DNA]</scope>
    <source>
        <strain>ATCC BAA-1253 / SS9</strain>
    </source>
</reference>
<accession>Q6LM07</accession>
<evidence type="ECO:0000255" key="1">
    <source>
        <dbReference type="HAMAP-Rule" id="MF_01552"/>
    </source>
</evidence>
<gene>
    <name evidence="1" type="primary">rimK</name>
    <name type="ordered locus">PBPRA3386</name>
</gene>
<feature type="chain" id="PRO_0000205469" description="Probable alpha-L-glutamate ligase">
    <location>
        <begin position="1"/>
        <end position="301"/>
    </location>
</feature>
<feature type="domain" description="ATP-grasp" evidence="1">
    <location>
        <begin position="104"/>
        <end position="287"/>
    </location>
</feature>
<feature type="binding site" evidence="1">
    <location>
        <position position="141"/>
    </location>
    <ligand>
        <name>ATP</name>
        <dbReference type="ChEBI" id="CHEBI:30616"/>
    </ligand>
</feature>
<feature type="binding site" evidence="1">
    <location>
        <begin position="178"/>
        <end position="179"/>
    </location>
    <ligand>
        <name>ATP</name>
        <dbReference type="ChEBI" id="CHEBI:30616"/>
    </ligand>
</feature>
<feature type="binding site" evidence="1">
    <location>
        <position position="187"/>
    </location>
    <ligand>
        <name>ATP</name>
        <dbReference type="ChEBI" id="CHEBI:30616"/>
    </ligand>
</feature>
<feature type="binding site" evidence="1">
    <location>
        <begin position="211"/>
        <end position="213"/>
    </location>
    <ligand>
        <name>ATP</name>
        <dbReference type="ChEBI" id="CHEBI:30616"/>
    </ligand>
</feature>
<feature type="binding site" evidence="1">
    <location>
        <position position="248"/>
    </location>
    <ligand>
        <name>Mg(2+)</name>
        <dbReference type="ChEBI" id="CHEBI:18420"/>
        <label>1</label>
    </ligand>
</feature>
<feature type="binding site" evidence="1">
    <location>
        <position position="248"/>
    </location>
    <ligand>
        <name>Mn(2+)</name>
        <dbReference type="ChEBI" id="CHEBI:29035"/>
        <label>1</label>
    </ligand>
</feature>
<feature type="binding site" evidence="1">
    <location>
        <position position="260"/>
    </location>
    <ligand>
        <name>Mg(2+)</name>
        <dbReference type="ChEBI" id="CHEBI:18420"/>
        <label>1</label>
    </ligand>
</feature>
<feature type="binding site" evidence="1">
    <location>
        <position position="260"/>
    </location>
    <ligand>
        <name>Mg(2+)</name>
        <dbReference type="ChEBI" id="CHEBI:18420"/>
        <label>2</label>
    </ligand>
</feature>
<feature type="binding site" evidence="1">
    <location>
        <position position="260"/>
    </location>
    <ligand>
        <name>Mn(2+)</name>
        <dbReference type="ChEBI" id="CHEBI:29035"/>
        <label>1</label>
    </ligand>
</feature>
<feature type="binding site" evidence="1">
    <location>
        <position position="260"/>
    </location>
    <ligand>
        <name>Mn(2+)</name>
        <dbReference type="ChEBI" id="CHEBI:29035"/>
        <label>2</label>
    </ligand>
</feature>
<feature type="binding site" evidence="1">
    <location>
        <position position="262"/>
    </location>
    <ligand>
        <name>Mg(2+)</name>
        <dbReference type="ChEBI" id="CHEBI:18420"/>
        <label>2</label>
    </ligand>
</feature>
<feature type="binding site" evidence="1">
    <location>
        <position position="262"/>
    </location>
    <ligand>
        <name>Mn(2+)</name>
        <dbReference type="ChEBI" id="CHEBI:29035"/>
        <label>2</label>
    </ligand>
</feature>
<comment type="cofactor">
    <cofactor evidence="1">
        <name>Mg(2+)</name>
        <dbReference type="ChEBI" id="CHEBI:18420"/>
    </cofactor>
    <cofactor evidence="1">
        <name>Mn(2+)</name>
        <dbReference type="ChEBI" id="CHEBI:29035"/>
    </cofactor>
    <text evidence="1">Binds 2 magnesium or manganese ions per subunit.</text>
</comment>
<comment type="similarity">
    <text evidence="1">Belongs to the RimK family.</text>
</comment>
<keyword id="KW-0067">ATP-binding</keyword>
<keyword id="KW-0436">Ligase</keyword>
<keyword id="KW-0460">Magnesium</keyword>
<keyword id="KW-0464">Manganese</keyword>
<keyword id="KW-0479">Metal-binding</keyword>
<keyword id="KW-0547">Nucleotide-binding</keyword>
<keyword id="KW-0648">Protein biosynthesis</keyword>
<keyword id="KW-1185">Reference proteome</keyword>
<protein>
    <recommendedName>
        <fullName evidence="1">Probable alpha-L-glutamate ligase</fullName>
        <ecNumber evidence="1">6.3.2.-</ecNumber>
    </recommendedName>
</protein>
<name>RIMK_PHOPR</name>
<sequence length="301" mass="32742">MKIGILSQNETLYSTRRLREACEARGHEAVIINALRCYMNINSVQPSIHFEGNDLTGFDAIIPRIGADITFYGCSVLRQFEMMDVFSVNQSIAISRSRDKLRSLQLLSRKGVGMPITGFASKPDDVPDLIKMVGGAPLVIKLLEGTQGIGVVLAETQTAAESVIEAFMGLKANIMVQEYIKEAGGADIRCFVIGDKVIATMKRQAADGEFRSNLHRGGSASLVRITPEERKTAVAAAKAMGLSVAGVDLLRSERGPLIMEVNSSPGLEGIEAATEKDIAGMIIEYIEKNAAKKNRRHLQYQ</sequence>
<proteinExistence type="inferred from homology"/>
<organism>
    <name type="scientific">Photobacterium profundum (strain SS9)</name>
    <dbReference type="NCBI Taxonomy" id="298386"/>
    <lineage>
        <taxon>Bacteria</taxon>
        <taxon>Pseudomonadati</taxon>
        <taxon>Pseudomonadota</taxon>
        <taxon>Gammaproteobacteria</taxon>
        <taxon>Vibrionales</taxon>
        <taxon>Vibrionaceae</taxon>
        <taxon>Photobacterium</taxon>
    </lineage>
</organism>
<dbReference type="EC" id="6.3.2.-" evidence="1"/>
<dbReference type="EMBL" id="CR378673">
    <property type="protein sequence ID" value="CAG21671.1"/>
    <property type="molecule type" value="Genomic_DNA"/>
</dbReference>
<dbReference type="RefSeq" id="WP_011219917.1">
    <property type="nucleotide sequence ID" value="NC_006370.1"/>
</dbReference>
<dbReference type="SMR" id="Q6LM07"/>
<dbReference type="STRING" id="298386.PBPRA3386"/>
<dbReference type="KEGG" id="ppr:PBPRA3386"/>
<dbReference type="eggNOG" id="COG0189">
    <property type="taxonomic scope" value="Bacteria"/>
</dbReference>
<dbReference type="HOGENOM" id="CLU_054353_0_1_6"/>
<dbReference type="Proteomes" id="UP000000593">
    <property type="component" value="Chromosome 1"/>
</dbReference>
<dbReference type="GO" id="GO:0005737">
    <property type="term" value="C:cytoplasm"/>
    <property type="evidence" value="ECO:0007669"/>
    <property type="project" value="TreeGrafter"/>
</dbReference>
<dbReference type="GO" id="GO:0005524">
    <property type="term" value="F:ATP binding"/>
    <property type="evidence" value="ECO:0007669"/>
    <property type="project" value="UniProtKB-UniRule"/>
</dbReference>
<dbReference type="GO" id="GO:0046872">
    <property type="term" value="F:metal ion binding"/>
    <property type="evidence" value="ECO:0007669"/>
    <property type="project" value="UniProtKB-KW"/>
</dbReference>
<dbReference type="GO" id="GO:0018169">
    <property type="term" value="F:ribosomal S6-glutamic acid ligase activity"/>
    <property type="evidence" value="ECO:0007669"/>
    <property type="project" value="TreeGrafter"/>
</dbReference>
<dbReference type="GO" id="GO:0036211">
    <property type="term" value="P:protein modification process"/>
    <property type="evidence" value="ECO:0007669"/>
    <property type="project" value="InterPro"/>
</dbReference>
<dbReference type="GO" id="GO:0009432">
    <property type="term" value="P:SOS response"/>
    <property type="evidence" value="ECO:0007669"/>
    <property type="project" value="TreeGrafter"/>
</dbReference>
<dbReference type="GO" id="GO:0006412">
    <property type="term" value="P:translation"/>
    <property type="evidence" value="ECO:0007669"/>
    <property type="project" value="UniProtKB-KW"/>
</dbReference>
<dbReference type="FunFam" id="3.40.50.20:FF:000004">
    <property type="entry name" value="Probable alpha-L-glutamate ligase"/>
    <property type="match status" value="1"/>
</dbReference>
<dbReference type="FunFam" id="3.30.1490.20:FF:000005">
    <property type="entry name" value="Probable alpha-L-glutamate ligase 1"/>
    <property type="match status" value="1"/>
</dbReference>
<dbReference type="FunFam" id="3.30.470.20:FF:000016">
    <property type="entry name" value="Ribosomal protein S6--L-glutamate ligase"/>
    <property type="match status" value="1"/>
</dbReference>
<dbReference type="Gene3D" id="3.40.50.20">
    <property type="match status" value="1"/>
</dbReference>
<dbReference type="Gene3D" id="3.30.1490.20">
    <property type="entry name" value="ATP-grasp fold, A domain"/>
    <property type="match status" value="1"/>
</dbReference>
<dbReference type="Gene3D" id="3.30.470.20">
    <property type="entry name" value="ATP-grasp fold, B domain"/>
    <property type="match status" value="1"/>
</dbReference>
<dbReference type="HAMAP" id="MF_01552">
    <property type="entry name" value="RimK"/>
    <property type="match status" value="1"/>
</dbReference>
<dbReference type="InterPro" id="IPR011761">
    <property type="entry name" value="ATP-grasp"/>
</dbReference>
<dbReference type="InterPro" id="IPR013651">
    <property type="entry name" value="ATP-grasp_RimK-type"/>
</dbReference>
<dbReference type="InterPro" id="IPR013815">
    <property type="entry name" value="ATP_grasp_subdomain_1"/>
</dbReference>
<dbReference type="InterPro" id="IPR023533">
    <property type="entry name" value="RimK"/>
</dbReference>
<dbReference type="InterPro" id="IPR041107">
    <property type="entry name" value="Rimk_N"/>
</dbReference>
<dbReference type="InterPro" id="IPR004666">
    <property type="entry name" value="Rp_bS6_RimK/Lys_biosynth_LsyX"/>
</dbReference>
<dbReference type="NCBIfam" id="NF007764">
    <property type="entry name" value="PRK10446.1"/>
    <property type="match status" value="1"/>
</dbReference>
<dbReference type="NCBIfam" id="TIGR00768">
    <property type="entry name" value="rimK_fam"/>
    <property type="match status" value="1"/>
</dbReference>
<dbReference type="PANTHER" id="PTHR21621:SF7">
    <property type="entry name" value="RIBOSOMAL PROTEIN BS6--L-GLUTAMATE LIGASE"/>
    <property type="match status" value="1"/>
</dbReference>
<dbReference type="PANTHER" id="PTHR21621">
    <property type="entry name" value="RIBOSOMAL PROTEIN S6 MODIFICATION PROTEIN"/>
    <property type="match status" value="1"/>
</dbReference>
<dbReference type="Pfam" id="PF08443">
    <property type="entry name" value="RimK"/>
    <property type="match status" value="1"/>
</dbReference>
<dbReference type="Pfam" id="PF18030">
    <property type="entry name" value="Rimk_N"/>
    <property type="match status" value="1"/>
</dbReference>
<dbReference type="SUPFAM" id="SSF56059">
    <property type="entry name" value="Glutathione synthetase ATP-binding domain-like"/>
    <property type="match status" value="1"/>
</dbReference>
<dbReference type="PROSITE" id="PS50975">
    <property type="entry name" value="ATP_GRASP"/>
    <property type="match status" value="1"/>
</dbReference>